<evidence type="ECO:0000255" key="1">
    <source>
        <dbReference type="HAMAP-Rule" id="MF_00268"/>
    </source>
</evidence>
<evidence type="ECO:0000256" key="2">
    <source>
        <dbReference type="SAM" id="MobiDB-lite"/>
    </source>
</evidence>
<reference key="1">
    <citation type="journal article" date="2009" name="PLoS Genet.">
        <title>Organised genome dynamics in the Escherichia coli species results in highly diverse adaptive paths.</title>
        <authorList>
            <person name="Touchon M."/>
            <person name="Hoede C."/>
            <person name="Tenaillon O."/>
            <person name="Barbe V."/>
            <person name="Baeriswyl S."/>
            <person name="Bidet P."/>
            <person name="Bingen E."/>
            <person name="Bonacorsi S."/>
            <person name="Bouchier C."/>
            <person name="Bouvet O."/>
            <person name="Calteau A."/>
            <person name="Chiapello H."/>
            <person name="Clermont O."/>
            <person name="Cruveiller S."/>
            <person name="Danchin A."/>
            <person name="Diard M."/>
            <person name="Dossat C."/>
            <person name="Karoui M.E."/>
            <person name="Frapy E."/>
            <person name="Garry L."/>
            <person name="Ghigo J.M."/>
            <person name="Gilles A.M."/>
            <person name="Johnson J."/>
            <person name="Le Bouguenec C."/>
            <person name="Lescat M."/>
            <person name="Mangenot S."/>
            <person name="Martinez-Jehanne V."/>
            <person name="Matic I."/>
            <person name="Nassif X."/>
            <person name="Oztas S."/>
            <person name="Petit M.A."/>
            <person name="Pichon C."/>
            <person name="Rouy Z."/>
            <person name="Ruf C.S."/>
            <person name="Schneider D."/>
            <person name="Tourret J."/>
            <person name="Vacherie B."/>
            <person name="Vallenet D."/>
            <person name="Medigue C."/>
            <person name="Rocha E.P.C."/>
            <person name="Denamur E."/>
        </authorList>
    </citation>
    <scope>NUCLEOTIDE SEQUENCE [LARGE SCALE GENOMIC DNA]</scope>
    <source>
        <strain>IAI39 / ExPEC</strain>
    </source>
</reference>
<accession>B7NSH9</accession>
<name>RECA_ECO7I</name>
<protein>
    <recommendedName>
        <fullName evidence="1">Protein RecA</fullName>
    </recommendedName>
    <alternativeName>
        <fullName evidence="1">Recombinase A</fullName>
    </alternativeName>
</protein>
<keyword id="KW-0067">ATP-binding</keyword>
<keyword id="KW-0963">Cytoplasm</keyword>
<keyword id="KW-0227">DNA damage</keyword>
<keyword id="KW-0233">DNA recombination</keyword>
<keyword id="KW-0234">DNA repair</keyword>
<keyword id="KW-0238">DNA-binding</keyword>
<keyword id="KW-0547">Nucleotide-binding</keyword>
<keyword id="KW-0742">SOS response</keyword>
<gene>
    <name evidence="1" type="primary">recA</name>
    <name type="ordered locus">ECIAI39_2885</name>
</gene>
<feature type="chain" id="PRO_1000193311" description="Protein RecA">
    <location>
        <begin position="1"/>
        <end position="353"/>
    </location>
</feature>
<feature type="region of interest" description="Disordered" evidence="2">
    <location>
        <begin position="330"/>
        <end position="353"/>
    </location>
</feature>
<feature type="compositionally biased region" description="Acidic residues" evidence="2">
    <location>
        <begin position="339"/>
        <end position="353"/>
    </location>
</feature>
<feature type="binding site" evidence="1">
    <location>
        <begin position="67"/>
        <end position="74"/>
    </location>
    <ligand>
        <name>ATP</name>
        <dbReference type="ChEBI" id="CHEBI:30616"/>
    </ligand>
</feature>
<organism>
    <name type="scientific">Escherichia coli O7:K1 (strain IAI39 / ExPEC)</name>
    <dbReference type="NCBI Taxonomy" id="585057"/>
    <lineage>
        <taxon>Bacteria</taxon>
        <taxon>Pseudomonadati</taxon>
        <taxon>Pseudomonadota</taxon>
        <taxon>Gammaproteobacteria</taxon>
        <taxon>Enterobacterales</taxon>
        <taxon>Enterobacteriaceae</taxon>
        <taxon>Escherichia</taxon>
    </lineage>
</organism>
<comment type="function">
    <text evidence="1">Can catalyze the hydrolysis of ATP in the presence of single-stranded DNA, the ATP-dependent uptake of single-stranded DNA by duplex DNA, and the ATP-dependent hybridization of homologous single-stranded DNAs. It interacts with LexA causing its activation and leading to its autocatalytic cleavage.</text>
</comment>
<comment type="subcellular location">
    <subcellularLocation>
        <location evidence="1">Cytoplasm</location>
    </subcellularLocation>
</comment>
<comment type="similarity">
    <text evidence="1">Belongs to the RecA family.</text>
</comment>
<sequence>MAIDENKQKALAAALGQIEKQFGKGSIMRLGEDRSMDVETISTGSLSLDIALGAGGLPMGRIVEIYGPESSGKTTLTLQVIAAAQREGKTCAFIDAEHALDPIYARKLGVDIDNLLCSQPDTGEQALEICDALARSGAVDVIVVDSVAALTPKAEIEGEIGDSHMGLAARMMSQAMRKLAGNLKQSNTLLIFINQIRMKIGVMFGNPETTTGGNALKFYASVRLDIRRIGAVKEGENVVGSETRVKVVKNKIAAPFKQAEFQILYGEGINFYGELVDLGVKEKLIEKAGAWYSYKGEKIGQGKANATAWLKDNPETAKEIEKKVRELLLSNPNSTPDFSVDDSEGVAETNEDF</sequence>
<proteinExistence type="inferred from homology"/>
<dbReference type="EMBL" id="CU928164">
    <property type="protein sequence ID" value="CAR19006.1"/>
    <property type="molecule type" value="Genomic_DNA"/>
</dbReference>
<dbReference type="RefSeq" id="WP_000963143.1">
    <property type="nucleotide sequence ID" value="NC_011750.1"/>
</dbReference>
<dbReference type="RefSeq" id="YP_002408818.1">
    <property type="nucleotide sequence ID" value="NC_011750.1"/>
</dbReference>
<dbReference type="SMR" id="B7NSH9"/>
<dbReference type="STRING" id="585057.ECIAI39_2885"/>
<dbReference type="GeneID" id="93779312"/>
<dbReference type="KEGG" id="ect:ECIAI39_2885"/>
<dbReference type="PATRIC" id="fig|585057.6.peg.2993"/>
<dbReference type="HOGENOM" id="CLU_040469_3_2_6"/>
<dbReference type="Proteomes" id="UP000000749">
    <property type="component" value="Chromosome"/>
</dbReference>
<dbReference type="GO" id="GO:0005829">
    <property type="term" value="C:cytosol"/>
    <property type="evidence" value="ECO:0007669"/>
    <property type="project" value="TreeGrafter"/>
</dbReference>
<dbReference type="GO" id="GO:0005524">
    <property type="term" value="F:ATP binding"/>
    <property type="evidence" value="ECO:0007669"/>
    <property type="project" value="UniProtKB-UniRule"/>
</dbReference>
<dbReference type="GO" id="GO:0016887">
    <property type="term" value="F:ATP hydrolysis activity"/>
    <property type="evidence" value="ECO:0007669"/>
    <property type="project" value="InterPro"/>
</dbReference>
<dbReference type="GO" id="GO:0140664">
    <property type="term" value="F:ATP-dependent DNA damage sensor activity"/>
    <property type="evidence" value="ECO:0007669"/>
    <property type="project" value="InterPro"/>
</dbReference>
<dbReference type="GO" id="GO:0003684">
    <property type="term" value="F:damaged DNA binding"/>
    <property type="evidence" value="ECO:0007669"/>
    <property type="project" value="UniProtKB-UniRule"/>
</dbReference>
<dbReference type="GO" id="GO:0003697">
    <property type="term" value="F:single-stranded DNA binding"/>
    <property type="evidence" value="ECO:0007669"/>
    <property type="project" value="UniProtKB-UniRule"/>
</dbReference>
<dbReference type="GO" id="GO:0006310">
    <property type="term" value="P:DNA recombination"/>
    <property type="evidence" value="ECO:0007669"/>
    <property type="project" value="UniProtKB-UniRule"/>
</dbReference>
<dbReference type="GO" id="GO:0006281">
    <property type="term" value="P:DNA repair"/>
    <property type="evidence" value="ECO:0007669"/>
    <property type="project" value="UniProtKB-UniRule"/>
</dbReference>
<dbReference type="GO" id="GO:0009432">
    <property type="term" value="P:SOS response"/>
    <property type="evidence" value="ECO:0007669"/>
    <property type="project" value="UniProtKB-UniRule"/>
</dbReference>
<dbReference type="CDD" id="cd00983">
    <property type="entry name" value="RecA"/>
    <property type="match status" value="1"/>
</dbReference>
<dbReference type="FunFam" id="3.40.50.300:FF:000087">
    <property type="entry name" value="Recombinase RecA"/>
    <property type="match status" value="1"/>
</dbReference>
<dbReference type="Gene3D" id="3.40.50.300">
    <property type="entry name" value="P-loop containing nucleotide triphosphate hydrolases"/>
    <property type="match status" value="1"/>
</dbReference>
<dbReference type="HAMAP" id="MF_00268">
    <property type="entry name" value="RecA"/>
    <property type="match status" value="1"/>
</dbReference>
<dbReference type="InterPro" id="IPR003593">
    <property type="entry name" value="AAA+_ATPase"/>
</dbReference>
<dbReference type="InterPro" id="IPR013765">
    <property type="entry name" value="DNA_recomb/repair_RecA"/>
</dbReference>
<dbReference type="InterPro" id="IPR020584">
    <property type="entry name" value="DNA_recomb/repair_RecA_CS"/>
</dbReference>
<dbReference type="InterPro" id="IPR027417">
    <property type="entry name" value="P-loop_NTPase"/>
</dbReference>
<dbReference type="InterPro" id="IPR049261">
    <property type="entry name" value="RecA-like_C"/>
</dbReference>
<dbReference type="InterPro" id="IPR049428">
    <property type="entry name" value="RecA-like_N"/>
</dbReference>
<dbReference type="InterPro" id="IPR020588">
    <property type="entry name" value="RecA_ATP-bd"/>
</dbReference>
<dbReference type="InterPro" id="IPR023400">
    <property type="entry name" value="RecA_C_sf"/>
</dbReference>
<dbReference type="InterPro" id="IPR020587">
    <property type="entry name" value="RecA_monomer-monomer_interface"/>
</dbReference>
<dbReference type="NCBIfam" id="TIGR02012">
    <property type="entry name" value="tigrfam_recA"/>
    <property type="match status" value="1"/>
</dbReference>
<dbReference type="PANTHER" id="PTHR45900:SF1">
    <property type="entry name" value="MITOCHONDRIAL DNA REPAIR PROTEIN RECA HOMOLOG-RELATED"/>
    <property type="match status" value="1"/>
</dbReference>
<dbReference type="PANTHER" id="PTHR45900">
    <property type="entry name" value="RECA"/>
    <property type="match status" value="1"/>
</dbReference>
<dbReference type="Pfam" id="PF00154">
    <property type="entry name" value="RecA"/>
    <property type="match status" value="1"/>
</dbReference>
<dbReference type="Pfam" id="PF21096">
    <property type="entry name" value="RecA_C"/>
    <property type="match status" value="1"/>
</dbReference>
<dbReference type="PRINTS" id="PR00142">
    <property type="entry name" value="RECA"/>
</dbReference>
<dbReference type="SMART" id="SM00382">
    <property type="entry name" value="AAA"/>
    <property type="match status" value="1"/>
</dbReference>
<dbReference type="SUPFAM" id="SSF52540">
    <property type="entry name" value="P-loop containing nucleoside triphosphate hydrolases"/>
    <property type="match status" value="1"/>
</dbReference>
<dbReference type="SUPFAM" id="SSF54752">
    <property type="entry name" value="RecA protein, C-terminal domain"/>
    <property type="match status" value="1"/>
</dbReference>
<dbReference type="PROSITE" id="PS00321">
    <property type="entry name" value="RECA_1"/>
    <property type="match status" value="1"/>
</dbReference>
<dbReference type="PROSITE" id="PS50162">
    <property type="entry name" value="RECA_2"/>
    <property type="match status" value="1"/>
</dbReference>
<dbReference type="PROSITE" id="PS50163">
    <property type="entry name" value="RECA_3"/>
    <property type="match status" value="1"/>
</dbReference>